<proteinExistence type="evidence at protein level"/>
<organism>
    <name type="scientific">Rhizobium johnstonii (strain DSM 114642 / LMG 32736 / 3841)</name>
    <name type="common">Rhizobium leguminosarum bv. viciae</name>
    <dbReference type="NCBI Taxonomy" id="216596"/>
    <lineage>
        <taxon>Bacteria</taxon>
        <taxon>Pseudomonadati</taxon>
        <taxon>Pseudomonadota</taxon>
        <taxon>Alphaproteobacteria</taxon>
        <taxon>Hyphomicrobiales</taxon>
        <taxon>Rhizobiaceae</taxon>
        <taxon>Rhizobium/Agrobacterium group</taxon>
        <taxon>Rhizobium</taxon>
        <taxon>Rhizobium johnstonii</taxon>
    </lineage>
</organism>
<gene>
    <name type="primary">aapJ</name>
    <name type="ordered locus">RL2204</name>
</gene>
<accession>Q52812</accession>
<accession>Q1MH71</accession>
<evidence type="ECO:0000255" key="1"/>
<evidence type="ECO:0000269" key="2">
    <source>
    </source>
</evidence>
<evidence type="ECO:0000269" key="3">
    <source>
    </source>
</evidence>
<evidence type="ECO:0000303" key="4">
    <source>
    </source>
</evidence>
<evidence type="ECO:0000305" key="5"/>
<evidence type="ECO:0000305" key="6">
    <source>
    </source>
</evidence>
<evidence type="ECO:0000305" key="7">
    <source>
    </source>
</evidence>
<comment type="function">
    <text evidence="2 3">Part of the ABC transporter complex AapJQMP involved in uptake of L-amino acids (PubMed:19597156, PubMed:8898392). Affects the efflux of these amino acids as well (PubMed:8898392). Essential for the development of bacteroids, the differentiated legume-symbiotic forms of this bacterium, and for the effective N(2) fixation by them (PubMed:19597156).</text>
</comment>
<comment type="subunit">
    <text evidence="6 7">The complex is composed of two ATP-binding proteins (AapP), two transmembrane proteins (AapM and AapQ) and a solute-binding protein (AapJ).</text>
</comment>
<comment type="subcellular location">
    <subcellularLocation>
        <location>Periplasm</location>
    </subcellularLocation>
</comment>
<comment type="disruption phenotype">
    <text evidence="2">Reduced uptake of amino acids Glu, Asp, Ala, Leu, Ile and Val by bacteroids that lack this gene and the genes braC and braC3 or braE and braF from another ABC uptake system of branched-chain amino acids. Pea plants inoculated with bacteroids of either triple mutant are defective in symbiosis; the plants are yellow, have increased numbers of small pale pink root nodules, dry weights similar to uninoculated control plants and 30% acetylene reduction compared to plants inoculated with wild-type bacteroids. AapJ/braE/braF triple mutant bacteroids are smaller, have reduced bacteroid protein and cell number per plant compared to wild-type, and have a lower chromosome number of 5 compared with 8 of the wild-type.</text>
</comment>
<comment type="similarity">
    <text evidence="5">Belongs to the bacterial solute-binding protein 3 family.</text>
</comment>
<feature type="signal peptide" evidence="1">
    <location>
        <begin position="1"/>
        <end position="23"/>
    </location>
</feature>
<feature type="chain" id="PRO_0000031748" description="General L-amino acid-binding periplasmic protein AapJ">
    <location>
        <begin position="24"/>
        <end position="341"/>
    </location>
</feature>
<sequence length="341" mass="36699">MKNKLLSAAIGAAVLAVGASAASATTLSDVKAKGFVQCGVNTGLTGFAAPDASGNWAGFDVDFCKAVASAVFGDPTKVKYTPTNAKERFTALQSGEIDVLSRNTTWTINRDTALGFNFRPVTYYDGQGFMVRKGLNVKSALELSGAAICVQSGTTTELNLADYFKTNNLQYNPVVFENLPEVNAAYDAGRCDVYTTDQSGLYSLRLTLKNPDEHIILPEIISKEPLGPAVRQGDDQWFDIVSWTAYALINAEEFGITQANVDEMKNSPNPDIKRFLGSETDTKIGTDLGLTNDWAANVIKGVGNYGEIFERNIGQGSPLKIARGLNALWNKGGIQYAPPVR</sequence>
<reference key="1">
    <citation type="journal article" date="1996" name="Mol. Microbiol.">
        <title>The general L-amino acid permease of Rhizobium leguminosarum is an ABC uptake system that also influences efflux of solutes.</title>
        <authorList>
            <person name="Walshaw D.L."/>
            <person name="Poole P.S."/>
        </authorList>
    </citation>
    <scope>NUCLEOTIDE SEQUENCE [GENOMIC DNA]</scope>
    <scope>FUNCTION</scope>
    <scope>SUBUNIT</scope>
</reference>
<reference key="2">
    <citation type="journal article" date="2006" name="Genome Biol.">
        <title>The genome of Rhizobium leguminosarum has recognizable core and accessory components.</title>
        <authorList>
            <person name="Young J.P.W."/>
            <person name="Crossman L.C."/>
            <person name="Johnston A.W.B."/>
            <person name="Thomson N.R."/>
            <person name="Ghazoui Z.F."/>
            <person name="Hull K.H."/>
            <person name="Wexler M."/>
            <person name="Curson A.R.J."/>
            <person name="Todd J.D."/>
            <person name="Poole P.S."/>
            <person name="Mauchline T.H."/>
            <person name="East A.K."/>
            <person name="Quail M.A."/>
            <person name="Churcher C."/>
            <person name="Arrowsmith C."/>
            <person name="Cherevach I."/>
            <person name="Chillingworth T."/>
            <person name="Clarke K."/>
            <person name="Cronin A."/>
            <person name="Davis P."/>
            <person name="Fraser A."/>
            <person name="Hance Z."/>
            <person name="Hauser H."/>
            <person name="Jagels K."/>
            <person name="Moule S."/>
            <person name="Mungall K."/>
            <person name="Norbertczak H."/>
            <person name="Rabbinowitsch E."/>
            <person name="Sanders M."/>
            <person name="Simmonds M."/>
            <person name="Whitehead S."/>
            <person name="Parkhill J."/>
        </authorList>
    </citation>
    <scope>NUCLEOTIDE SEQUENCE [LARGE SCALE GENOMIC DNA]</scope>
    <source>
        <strain>DSM 114642 / LMG 32736 / 3841</strain>
    </source>
</reference>
<reference key="3">
    <citation type="journal article" date="2009" name="Proc. Natl. Acad. Sci. U.S.A.">
        <title>Legumes regulate Rhizobium bacteroid development and persistence by the supply of branched-chain amino acids.</title>
        <authorList>
            <person name="Prell J."/>
            <person name="White J.P."/>
            <person name="Bourdes A."/>
            <person name="Bunnewell S."/>
            <person name="Bongaerts R.J."/>
            <person name="Poole P.S."/>
        </authorList>
    </citation>
    <scope>FUNCTION</scope>
    <scope>SUBUNIT</scope>
    <scope>DISRUPTION PHENOTYPE</scope>
    <source>
        <strain evidence="4">DSM 114642 / LMG 32736 / 3841</strain>
    </source>
</reference>
<keyword id="KW-0029">Amino-acid transport</keyword>
<keyword id="KW-0574">Periplasm</keyword>
<keyword id="KW-0732">Signal</keyword>
<keyword id="KW-0813">Transport</keyword>
<name>AAPJ_RHIJ3</name>
<protein>
    <recommendedName>
        <fullName>General L-amino acid-binding periplasmic protein AapJ</fullName>
    </recommendedName>
</protein>
<dbReference type="EMBL" id="X82596">
    <property type="protein sequence ID" value="CAA57933.1"/>
    <property type="molecule type" value="Genomic_DNA"/>
</dbReference>
<dbReference type="EMBL" id="AM236080">
    <property type="protein sequence ID" value="CAK07696.1"/>
    <property type="molecule type" value="Genomic_DNA"/>
</dbReference>
<dbReference type="RefSeq" id="WP_011651801.1">
    <property type="nucleotide sequence ID" value="NC_008380.1"/>
</dbReference>
<dbReference type="SMR" id="Q52812"/>
<dbReference type="TCDB" id="3.A.1.3.8">
    <property type="family name" value="the atp-binding cassette (abc) superfamily"/>
</dbReference>
<dbReference type="EnsemblBacteria" id="CAK07696">
    <property type="protein sequence ID" value="CAK07696"/>
    <property type="gene ID" value="RL2204"/>
</dbReference>
<dbReference type="KEGG" id="rle:RL2204"/>
<dbReference type="eggNOG" id="COG0834">
    <property type="taxonomic scope" value="Bacteria"/>
</dbReference>
<dbReference type="HOGENOM" id="CLU_019602_3_2_5"/>
<dbReference type="Proteomes" id="UP000006575">
    <property type="component" value="Chromosome"/>
</dbReference>
<dbReference type="GO" id="GO:0055052">
    <property type="term" value="C:ATP-binding cassette (ABC) transporter complex, substrate-binding subunit-containing"/>
    <property type="evidence" value="ECO:0000315"/>
    <property type="project" value="UniProtKB"/>
</dbReference>
<dbReference type="GO" id="GO:0030288">
    <property type="term" value="C:outer membrane-bounded periplasmic space"/>
    <property type="evidence" value="ECO:0007669"/>
    <property type="project" value="InterPro"/>
</dbReference>
<dbReference type="GO" id="GO:0016595">
    <property type="term" value="F:glutamate binding"/>
    <property type="evidence" value="ECO:0000305"/>
    <property type="project" value="UniProtKB"/>
</dbReference>
<dbReference type="GO" id="GO:0070728">
    <property type="term" value="F:L-leucine binding"/>
    <property type="evidence" value="ECO:0000305"/>
    <property type="project" value="UniProtKB"/>
</dbReference>
<dbReference type="GO" id="GO:0043090">
    <property type="term" value="P:amino acid import"/>
    <property type="evidence" value="ECO:0000315"/>
    <property type="project" value="UniProtKB"/>
</dbReference>
<dbReference type="GO" id="GO:0015818">
    <property type="term" value="P:isoleucine transport"/>
    <property type="evidence" value="ECO:0000315"/>
    <property type="project" value="UniProtKB"/>
</dbReference>
<dbReference type="GO" id="GO:0051938">
    <property type="term" value="P:L-glutamate import"/>
    <property type="evidence" value="ECO:0000315"/>
    <property type="project" value="UniProtKB"/>
</dbReference>
<dbReference type="GO" id="GO:0015820">
    <property type="term" value="P:L-leucine transport"/>
    <property type="evidence" value="ECO:0000315"/>
    <property type="project" value="UniProtKB"/>
</dbReference>
<dbReference type="GO" id="GO:0015829">
    <property type="term" value="P:valine transport"/>
    <property type="evidence" value="ECO:0000315"/>
    <property type="project" value="UniProtKB"/>
</dbReference>
<dbReference type="CDD" id="cd13692">
    <property type="entry name" value="PBP2_BztA"/>
    <property type="match status" value="1"/>
</dbReference>
<dbReference type="Gene3D" id="3.40.190.10">
    <property type="entry name" value="Periplasmic binding protein-like II"/>
    <property type="match status" value="2"/>
</dbReference>
<dbReference type="InterPro" id="IPR051455">
    <property type="entry name" value="Bact_solute-bind_prot3"/>
</dbReference>
<dbReference type="InterPro" id="IPR005768">
    <property type="entry name" value="Lys_Arg_Orn-bd"/>
</dbReference>
<dbReference type="InterPro" id="IPR018313">
    <property type="entry name" value="SBP_3_CS"/>
</dbReference>
<dbReference type="InterPro" id="IPR001638">
    <property type="entry name" value="Solute-binding_3/MltF_N"/>
</dbReference>
<dbReference type="NCBIfam" id="TIGR01096">
    <property type="entry name" value="3A0103s03R"/>
    <property type="match status" value="1"/>
</dbReference>
<dbReference type="PANTHER" id="PTHR30085">
    <property type="entry name" value="AMINO ACID ABC TRANSPORTER PERMEASE"/>
    <property type="match status" value="1"/>
</dbReference>
<dbReference type="PANTHER" id="PTHR30085:SF7">
    <property type="entry name" value="AMINO-ACID ABC TRANSPORTER-BINDING PROTEIN YHDW-RELATED"/>
    <property type="match status" value="1"/>
</dbReference>
<dbReference type="Pfam" id="PF00497">
    <property type="entry name" value="SBP_bac_3"/>
    <property type="match status" value="1"/>
</dbReference>
<dbReference type="SMART" id="SM00062">
    <property type="entry name" value="PBPb"/>
    <property type="match status" value="1"/>
</dbReference>
<dbReference type="SUPFAM" id="SSF53850">
    <property type="entry name" value="Periplasmic binding protein-like II"/>
    <property type="match status" value="1"/>
</dbReference>
<dbReference type="PROSITE" id="PS01039">
    <property type="entry name" value="SBP_BACTERIAL_3"/>
    <property type="match status" value="1"/>
</dbReference>